<keyword id="KW-0066">ATP synthesis</keyword>
<keyword id="KW-0067">ATP-binding</keyword>
<keyword id="KW-0139">CF(1)</keyword>
<keyword id="KW-0375">Hydrogen ion transport</keyword>
<keyword id="KW-0406">Ion transport</keyword>
<keyword id="KW-0472">Membrane</keyword>
<keyword id="KW-0496">Mitochondrion</keyword>
<keyword id="KW-0999">Mitochondrion inner membrane</keyword>
<keyword id="KW-0547">Nucleotide-binding</keyword>
<keyword id="KW-0597">Phosphoprotein</keyword>
<keyword id="KW-1185">Reference proteome</keyword>
<keyword id="KW-0809">Transit peptide</keyword>
<keyword id="KW-1278">Translocase</keyword>
<keyword id="KW-0813">Transport</keyword>
<name>ATPBO_ARATH</name>
<feature type="transit peptide" description="Mitochondrion" evidence="4">
    <location>
        <begin position="1"/>
        <end position="54"/>
    </location>
</feature>
<feature type="chain" id="PRO_0000045429" description="ATP synthase subunit beta-3, mitochondrial">
    <location>
        <begin position="55"/>
        <end position="559"/>
    </location>
</feature>
<feature type="region of interest" description="Disordered" evidence="3">
    <location>
        <begin position="1"/>
        <end position="39"/>
    </location>
</feature>
<feature type="compositionally biased region" description="Low complexity" evidence="3">
    <location>
        <begin position="1"/>
        <end position="28"/>
    </location>
</feature>
<feature type="binding site" evidence="1">
    <location>
        <begin position="234"/>
        <end position="241"/>
    </location>
    <ligand>
        <name>ATP</name>
        <dbReference type="ChEBI" id="CHEBI:30616"/>
    </ligand>
</feature>
<feature type="modified residue" description="Phosphoserine" evidence="2">
    <location>
        <position position="62"/>
    </location>
</feature>
<gene>
    <name type="ordered locus">At5g08680</name>
    <name type="ORF">T2K12.16</name>
</gene>
<evidence type="ECO:0000250" key="1"/>
<evidence type="ECO:0000250" key="2">
    <source>
        <dbReference type="UniProtKB" id="P19366"/>
    </source>
</evidence>
<evidence type="ECO:0000256" key="3">
    <source>
        <dbReference type="SAM" id="MobiDB-lite"/>
    </source>
</evidence>
<evidence type="ECO:0000269" key="4">
    <source>
    </source>
</evidence>
<evidence type="ECO:0000305" key="5"/>
<evidence type="ECO:0000305" key="6">
    <source>
    </source>
</evidence>
<reference key="1">
    <citation type="journal article" date="2000" name="Nature">
        <title>Sequence and analysis of chromosome 5 of the plant Arabidopsis thaliana.</title>
        <authorList>
            <person name="Tabata S."/>
            <person name="Kaneko T."/>
            <person name="Nakamura Y."/>
            <person name="Kotani H."/>
            <person name="Kato T."/>
            <person name="Asamizu E."/>
            <person name="Miyajima N."/>
            <person name="Sasamoto S."/>
            <person name="Kimura T."/>
            <person name="Hosouchi T."/>
            <person name="Kawashima K."/>
            <person name="Kohara M."/>
            <person name="Matsumoto M."/>
            <person name="Matsuno A."/>
            <person name="Muraki A."/>
            <person name="Nakayama S."/>
            <person name="Nakazaki N."/>
            <person name="Naruo K."/>
            <person name="Okumura S."/>
            <person name="Shinpo S."/>
            <person name="Takeuchi C."/>
            <person name="Wada T."/>
            <person name="Watanabe A."/>
            <person name="Yamada M."/>
            <person name="Yasuda M."/>
            <person name="Sato S."/>
            <person name="de la Bastide M."/>
            <person name="Huang E."/>
            <person name="Spiegel L."/>
            <person name="Gnoj L."/>
            <person name="O'Shaughnessy A."/>
            <person name="Preston R."/>
            <person name="Habermann K."/>
            <person name="Murray J."/>
            <person name="Johnson D."/>
            <person name="Rohlfing T."/>
            <person name="Nelson J."/>
            <person name="Stoneking T."/>
            <person name="Pepin K."/>
            <person name="Spieth J."/>
            <person name="Sekhon M."/>
            <person name="Armstrong J."/>
            <person name="Becker M."/>
            <person name="Belter E."/>
            <person name="Cordum H."/>
            <person name="Cordes M."/>
            <person name="Courtney L."/>
            <person name="Courtney W."/>
            <person name="Dante M."/>
            <person name="Du H."/>
            <person name="Edwards J."/>
            <person name="Fryman J."/>
            <person name="Haakensen B."/>
            <person name="Lamar E."/>
            <person name="Latreille P."/>
            <person name="Leonard S."/>
            <person name="Meyer R."/>
            <person name="Mulvaney E."/>
            <person name="Ozersky P."/>
            <person name="Riley A."/>
            <person name="Strowmatt C."/>
            <person name="Wagner-McPherson C."/>
            <person name="Wollam A."/>
            <person name="Yoakum M."/>
            <person name="Bell M."/>
            <person name="Dedhia N."/>
            <person name="Parnell L."/>
            <person name="Shah R."/>
            <person name="Rodriguez M."/>
            <person name="Hoon See L."/>
            <person name="Vil D."/>
            <person name="Baker J."/>
            <person name="Kirchoff K."/>
            <person name="Toth K."/>
            <person name="King L."/>
            <person name="Bahret A."/>
            <person name="Miller B."/>
            <person name="Marra M.A."/>
            <person name="Martienssen R."/>
            <person name="McCombie W.R."/>
            <person name="Wilson R.K."/>
            <person name="Murphy G."/>
            <person name="Bancroft I."/>
            <person name="Volckaert G."/>
            <person name="Wambutt R."/>
            <person name="Duesterhoeft A."/>
            <person name="Stiekema W."/>
            <person name="Pohl T."/>
            <person name="Entian K.-D."/>
            <person name="Terryn N."/>
            <person name="Hartley N."/>
            <person name="Bent E."/>
            <person name="Johnson S."/>
            <person name="Langham S.-A."/>
            <person name="McCullagh B."/>
            <person name="Robben J."/>
            <person name="Grymonprez B."/>
            <person name="Zimmermann W."/>
            <person name="Ramsperger U."/>
            <person name="Wedler H."/>
            <person name="Balke K."/>
            <person name="Wedler E."/>
            <person name="Peters S."/>
            <person name="van Staveren M."/>
            <person name="Dirkse W."/>
            <person name="Mooijman P."/>
            <person name="Klein Lankhorst R."/>
            <person name="Weitzenegger T."/>
            <person name="Bothe G."/>
            <person name="Rose M."/>
            <person name="Hauf J."/>
            <person name="Berneiser S."/>
            <person name="Hempel S."/>
            <person name="Feldpausch M."/>
            <person name="Lamberth S."/>
            <person name="Villarroel R."/>
            <person name="Gielen J."/>
            <person name="Ardiles W."/>
            <person name="Bents O."/>
            <person name="Lemcke K."/>
            <person name="Kolesov G."/>
            <person name="Mayer K.F.X."/>
            <person name="Rudd S."/>
            <person name="Schoof H."/>
            <person name="Schueller C."/>
            <person name="Zaccaria P."/>
            <person name="Mewes H.-W."/>
            <person name="Bevan M."/>
            <person name="Fransz P.F."/>
        </authorList>
    </citation>
    <scope>NUCLEOTIDE SEQUENCE [LARGE SCALE GENOMIC DNA]</scope>
    <source>
        <strain>cv. Columbia</strain>
    </source>
</reference>
<reference key="2">
    <citation type="journal article" date="2017" name="Plant J.">
        <title>Araport11: a complete reannotation of the Arabidopsis thaliana reference genome.</title>
        <authorList>
            <person name="Cheng C.Y."/>
            <person name="Krishnakumar V."/>
            <person name="Chan A.P."/>
            <person name="Thibaud-Nissen F."/>
            <person name="Schobel S."/>
            <person name="Town C.D."/>
        </authorList>
    </citation>
    <scope>GENOME REANNOTATION</scope>
    <source>
        <strain>cv. Columbia</strain>
    </source>
</reference>
<reference key="3">
    <citation type="journal article" date="2002" name="Science">
        <title>Functional annotation of a full-length Arabidopsis cDNA collection.</title>
        <authorList>
            <person name="Seki M."/>
            <person name="Narusaka M."/>
            <person name="Kamiya A."/>
            <person name="Ishida J."/>
            <person name="Satou M."/>
            <person name="Sakurai T."/>
            <person name="Nakajima M."/>
            <person name="Enju A."/>
            <person name="Akiyama K."/>
            <person name="Oono Y."/>
            <person name="Muramatsu M."/>
            <person name="Hayashizaki Y."/>
            <person name="Kawai J."/>
            <person name="Carninci P."/>
            <person name="Itoh M."/>
            <person name="Ishii Y."/>
            <person name="Arakawa T."/>
            <person name="Shibata K."/>
            <person name="Shinagawa A."/>
            <person name="Shinozaki K."/>
        </authorList>
    </citation>
    <scope>NUCLEOTIDE SEQUENCE [LARGE SCALE MRNA]</scope>
    <source>
        <strain>cv. Columbia</strain>
    </source>
</reference>
<reference key="4">
    <citation type="journal article" date="2003" name="Science">
        <title>Empirical analysis of transcriptional activity in the Arabidopsis genome.</title>
        <authorList>
            <person name="Yamada K."/>
            <person name="Lim J."/>
            <person name="Dale J.M."/>
            <person name="Chen H."/>
            <person name="Shinn P."/>
            <person name="Palm C.J."/>
            <person name="Southwick A.M."/>
            <person name="Wu H.C."/>
            <person name="Kim C.J."/>
            <person name="Nguyen M."/>
            <person name="Pham P.K."/>
            <person name="Cheuk R.F."/>
            <person name="Karlin-Newmann G."/>
            <person name="Liu S.X."/>
            <person name="Lam B."/>
            <person name="Sakano H."/>
            <person name="Wu T."/>
            <person name="Yu G."/>
            <person name="Miranda M."/>
            <person name="Quach H.L."/>
            <person name="Tripp M."/>
            <person name="Chang C.H."/>
            <person name="Lee J.M."/>
            <person name="Toriumi M.J."/>
            <person name="Chan M.M."/>
            <person name="Tang C.C."/>
            <person name="Onodera C.S."/>
            <person name="Deng J.M."/>
            <person name="Akiyama K."/>
            <person name="Ansari Y."/>
            <person name="Arakawa T."/>
            <person name="Banh J."/>
            <person name="Banno F."/>
            <person name="Bowser L."/>
            <person name="Brooks S.Y."/>
            <person name="Carninci P."/>
            <person name="Chao Q."/>
            <person name="Choy N."/>
            <person name="Enju A."/>
            <person name="Goldsmith A.D."/>
            <person name="Gurjal M."/>
            <person name="Hansen N.F."/>
            <person name="Hayashizaki Y."/>
            <person name="Johnson-Hopson C."/>
            <person name="Hsuan V.W."/>
            <person name="Iida K."/>
            <person name="Karnes M."/>
            <person name="Khan S."/>
            <person name="Koesema E."/>
            <person name="Ishida J."/>
            <person name="Jiang P.X."/>
            <person name="Jones T."/>
            <person name="Kawai J."/>
            <person name="Kamiya A."/>
            <person name="Meyers C."/>
            <person name="Nakajima M."/>
            <person name="Narusaka M."/>
            <person name="Seki M."/>
            <person name="Sakurai T."/>
            <person name="Satou M."/>
            <person name="Tamse R."/>
            <person name="Vaysberg M."/>
            <person name="Wallender E.K."/>
            <person name="Wong C."/>
            <person name="Yamamura Y."/>
            <person name="Yuan S."/>
            <person name="Shinozaki K."/>
            <person name="Davis R.W."/>
            <person name="Theologis A."/>
            <person name="Ecker J.R."/>
        </authorList>
    </citation>
    <scope>NUCLEOTIDE SEQUENCE [LARGE SCALE MRNA]</scope>
    <source>
        <strain>cv. Columbia</strain>
    </source>
</reference>
<reference key="5">
    <citation type="journal article" date="2015" name="J. Exp. Bot.">
        <title>Identification of cleavage sites and substrate proteins for two mitochondrial intermediate peptidases in Arabidopsis thaliana.</title>
        <authorList>
            <person name="Carrie C."/>
            <person name="Venne A.S."/>
            <person name="Zahedi R.P."/>
            <person name="Soll J."/>
        </authorList>
    </citation>
    <scope>IDENTIFICATION BY MASS SPECTROMETRY</scope>
    <scope>CLEAVAGE OF TRANSIT PEPTIDE AFTER TYR-54</scope>
</reference>
<dbReference type="EC" id="7.1.2.2"/>
<dbReference type="EMBL" id="AL590346">
    <property type="protein sequence ID" value="CAC35873.1"/>
    <property type="molecule type" value="Genomic_DNA"/>
</dbReference>
<dbReference type="EMBL" id="CP002688">
    <property type="protein sequence ID" value="AED91337.1"/>
    <property type="molecule type" value="Genomic_DNA"/>
</dbReference>
<dbReference type="EMBL" id="AK117922">
    <property type="protein sequence ID" value="BAC42560.1"/>
    <property type="molecule type" value="mRNA"/>
</dbReference>
<dbReference type="EMBL" id="BT005920">
    <property type="protein sequence ID" value="AAO64855.1"/>
    <property type="molecule type" value="mRNA"/>
</dbReference>
<dbReference type="RefSeq" id="NP_680155.1">
    <property type="nucleotide sequence ID" value="NM_147850.3"/>
</dbReference>
<dbReference type="SMR" id="Q9C5A9"/>
<dbReference type="BioGRID" id="16047">
    <property type="interactions" value="3"/>
</dbReference>
<dbReference type="FunCoup" id="Q9C5A9">
    <property type="interactions" value="2439"/>
</dbReference>
<dbReference type="IntAct" id="Q9C5A9">
    <property type="interactions" value="1"/>
</dbReference>
<dbReference type="STRING" id="3702.Q9C5A9"/>
<dbReference type="iPTMnet" id="Q9C5A9"/>
<dbReference type="PaxDb" id="3702-AT5G08680.1"/>
<dbReference type="ProteomicsDB" id="241074"/>
<dbReference type="EnsemblPlants" id="AT5G08680.1">
    <property type="protein sequence ID" value="AT5G08680.1"/>
    <property type="gene ID" value="AT5G08680"/>
</dbReference>
<dbReference type="GeneID" id="830769"/>
<dbReference type="Gramene" id="AT5G08680.1">
    <property type="protein sequence ID" value="AT5G08680.1"/>
    <property type="gene ID" value="AT5G08680"/>
</dbReference>
<dbReference type="KEGG" id="ath:AT5G08680"/>
<dbReference type="Araport" id="AT5G08680"/>
<dbReference type="TAIR" id="AT5G08680"/>
<dbReference type="eggNOG" id="KOG1350">
    <property type="taxonomic scope" value="Eukaryota"/>
</dbReference>
<dbReference type="HOGENOM" id="CLU_022398_0_2_1"/>
<dbReference type="InParanoid" id="Q9C5A9"/>
<dbReference type="OMA" id="SMEEGGW"/>
<dbReference type="PhylomeDB" id="Q9C5A9"/>
<dbReference type="BioCyc" id="ARA:AT5G08680-MONOMER"/>
<dbReference type="PRO" id="PR:Q9C5A9"/>
<dbReference type="Proteomes" id="UP000006548">
    <property type="component" value="Chromosome 5"/>
</dbReference>
<dbReference type="ExpressionAtlas" id="Q9C5A9">
    <property type="expression patterns" value="baseline and differential"/>
</dbReference>
<dbReference type="GO" id="GO:0005743">
    <property type="term" value="C:mitochondrial inner membrane"/>
    <property type="evidence" value="ECO:0007669"/>
    <property type="project" value="UniProtKB-SubCell"/>
</dbReference>
<dbReference type="GO" id="GO:0005739">
    <property type="term" value="C:mitochondrion"/>
    <property type="evidence" value="ECO:0000314"/>
    <property type="project" value="TAIR"/>
</dbReference>
<dbReference type="GO" id="GO:0005886">
    <property type="term" value="C:plasma membrane"/>
    <property type="evidence" value="ECO:0007005"/>
    <property type="project" value="TAIR"/>
</dbReference>
<dbReference type="GO" id="GO:0045259">
    <property type="term" value="C:proton-transporting ATP synthase complex"/>
    <property type="evidence" value="ECO:0007669"/>
    <property type="project" value="UniProtKB-KW"/>
</dbReference>
<dbReference type="GO" id="GO:0005524">
    <property type="term" value="F:ATP binding"/>
    <property type="evidence" value="ECO:0007669"/>
    <property type="project" value="UniProtKB-KW"/>
</dbReference>
<dbReference type="GO" id="GO:0016887">
    <property type="term" value="F:ATP hydrolysis activity"/>
    <property type="evidence" value="ECO:0007669"/>
    <property type="project" value="InterPro"/>
</dbReference>
<dbReference type="GO" id="GO:0005507">
    <property type="term" value="F:copper ion binding"/>
    <property type="evidence" value="ECO:0007005"/>
    <property type="project" value="TAIR"/>
</dbReference>
<dbReference type="GO" id="GO:0046933">
    <property type="term" value="F:proton-transporting ATP synthase activity, rotational mechanism"/>
    <property type="evidence" value="ECO:0007669"/>
    <property type="project" value="InterPro"/>
</dbReference>
<dbReference type="CDD" id="cd18110">
    <property type="entry name" value="ATP-synt_F1_beta_C"/>
    <property type="match status" value="1"/>
</dbReference>
<dbReference type="CDD" id="cd18115">
    <property type="entry name" value="ATP-synt_F1_beta_N"/>
    <property type="match status" value="1"/>
</dbReference>
<dbReference type="CDD" id="cd01133">
    <property type="entry name" value="F1-ATPase_beta_CD"/>
    <property type="match status" value="1"/>
</dbReference>
<dbReference type="FunFam" id="1.10.10.910:FF:000001">
    <property type="entry name" value="ATP synthase subunit beta"/>
    <property type="match status" value="1"/>
</dbReference>
<dbReference type="FunFam" id="1.10.1140.10:FF:000001">
    <property type="entry name" value="ATP synthase subunit beta"/>
    <property type="match status" value="1"/>
</dbReference>
<dbReference type="FunFam" id="2.40.10.170:FF:000006">
    <property type="entry name" value="ATP synthase subunit beta"/>
    <property type="match status" value="1"/>
</dbReference>
<dbReference type="FunFam" id="3.40.50.12240:FF:000006">
    <property type="entry name" value="ATP synthase subunit beta"/>
    <property type="match status" value="1"/>
</dbReference>
<dbReference type="FunFam" id="3.40.50.300:FF:000026">
    <property type="entry name" value="ATP synthase subunit beta"/>
    <property type="match status" value="1"/>
</dbReference>
<dbReference type="Gene3D" id="2.40.10.170">
    <property type="match status" value="1"/>
</dbReference>
<dbReference type="Gene3D" id="1.10.10.910">
    <property type="entry name" value="ATP synthase, F1 beta subunit"/>
    <property type="match status" value="1"/>
</dbReference>
<dbReference type="Gene3D" id="1.10.1140.10">
    <property type="entry name" value="Bovine Mitochondrial F1-atpase, Atp Synthase Beta Chain, Chain D, domain 3"/>
    <property type="match status" value="1"/>
</dbReference>
<dbReference type="Gene3D" id="3.40.50.300">
    <property type="entry name" value="P-loop containing nucleotide triphosphate hydrolases"/>
    <property type="match status" value="1"/>
</dbReference>
<dbReference type="HAMAP" id="MF_01347">
    <property type="entry name" value="ATP_synth_beta_bact"/>
    <property type="match status" value="1"/>
</dbReference>
<dbReference type="InterPro" id="IPR003593">
    <property type="entry name" value="AAA+_ATPase"/>
</dbReference>
<dbReference type="InterPro" id="IPR055190">
    <property type="entry name" value="ATP-synt_VA_C"/>
</dbReference>
<dbReference type="InterPro" id="IPR042079">
    <property type="entry name" value="ATP_synt_F1_beta_sf"/>
</dbReference>
<dbReference type="InterPro" id="IPR020971">
    <property type="entry name" value="ATP_synth_F1_beta_su"/>
</dbReference>
<dbReference type="InterPro" id="IPR005722">
    <property type="entry name" value="ATP_synth_F1_bsu"/>
</dbReference>
<dbReference type="InterPro" id="IPR020003">
    <property type="entry name" value="ATPase_a/bsu_AS"/>
</dbReference>
<dbReference type="InterPro" id="IPR050053">
    <property type="entry name" value="ATPase_alpha/beta_chains"/>
</dbReference>
<dbReference type="InterPro" id="IPR004100">
    <property type="entry name" value="ATPase_F1/V1/A1_a/bsu_N"/>
</dbReference>
<dbReference type="InterPro" id="IPR036121">
    <property type="entry name" value="ATPase_F1/V1/A1_a/bsu_N_sf"/>
</dbReference>
<dbReference type="InterPro" id="IPR000194">
    <property type="entry name" value="ATPase_F1/V1/A1_a/bsu_nucl-bd"/>
</dbReference>
<dbReference type="InterPro" id="IPR024034">
    <property type="entry name" value="ATPase_F1/V1_b/a_C"/>
</dbReference>
<dbReference type="InterPro" id="IPR027417">
    <property type="entry name" value="P-loop_NTPase"/>
</dbReference>
<dbReference type="NCBIfam" id="TIGR01039">
    <property type="entry name" value="atpD"/>
    <property type="match status" value="1"/>
</dbReference>
<dbReference type="PANTHER" id="PTHR15184">
    <property type="entry name" value="ATP SYNTHASE"/>
    <property type="match status" value="1"/>
</dbReference>
<dbReference type="PANTHER" id="PTHR15184:SF80">
    <property type="entry name" value="ATP SYNTHASE SUBUNIT BETA-1, MITOCHONDRIAL-RELATED"/>
    <property type="match status" value="1"/>
</dbReference>
<dbReference type="Pfam" id="PF00006">
    <property type="entry name" value="ATP-synt_ab"/>
    <property type="match status" value="1"/>
</dbReference>
<dbReference type="Pfam" id="PF02874">
    <property type="entry name" value="ATP-synt_ab_N"/>
    <property type="match status" value="1"/>
</dbReference>
<dbReference type="Pfam" id="PF22919">
    <property type="entry name" value="ATP-synt_VA_C"/>
    <property type="match status" value="1"/>
</dbReference>
<dbReference type="Pfam" id="PF11421">
    <property type="entry name" value="Synthase_beta"/>
    <property type="match status" value="1"/>
</dbReference>
<dbReference type="PIRSF" id="PIRSF039072">
    <property type="entry name" value="ATPase_subunit_beta"/>
    <property type="match status" value="1"/>
</dbReference>
<dbReference type="SMART" id="SM00382">
    <property type="entry name" value="AAA"/>
    <property type="match status" value="1"/>
</dbReference>
<dbReference type="SUPFAM" id="SSF47917">
    <property type="entry name" value="C-terminal domain of alpha and beta subunits of F1 ATP synthase"/>
    <property type="match status" value="1"/>
</dbReference>
<dbReference type="SUPFAM" id="SSF50615">
    <property type="entry name" value="N-terminal domain of alpha and beta subunits of F1 ATP synthase"/>
    <property type="match status" value="1"/>
</dbReference>
<dbReference type="SUPFAM" id="SSF52540">
    <property type="entry name" value="P-loop containing nucleoside triphosphate hydrolases"/>
    <property type="match status" value="1"/>
</dbReference>
<dbReference type="PROSITE" id="PS00152">
    <property type="entry name" value="ATPASE_ALPHA_BETA"/>
    <property type="match status" value="1"/>
</dbReference>
<sequence>MASRRILSSLLRSSSSRSTSKSSLIGSRNPRLLSPGPAHGAAPCGTLLGRVAEYSTSSPANSAAPSSAPAKDEGKKTYDYGGKGAIGRVCQVIGAIVDVRFEDQEGLPPIMTSLEVQDHPTRLVLEVSHHLGQNVVRTIAMDGTEGLVRGRKVLNTGAPITVPVGRATLGRIMNVLGEPIDERGEIKTEHYLPIHRDAPALVDLATGQEILATGIKVVDLLAPYQRGGKIGLFGGAGVGKTVLIMELINNVAKAHGGFSVFAGVGERTREGNDLYREMIESGVIKLGEKQSESKCALVYGQMNEPPGARARVGLTGLTVAEYFRDAEGQDVLLFIDNIFRFTQANSEVSALLGRIPSAVGYQPTLASDLGALQERITTTKKGSITSVQAIYVPADDLTDPAPATTFAHLDATTVLSRQISELGIYPAVDPLDSTSRMLSPHILGEEHYNTARGVQKVLQNYKNLQDIIAILGMDELSEDDKLTVARARKIQRFLSQPFHVAEIFTGAPGKYVDLKENINSFQGLLDGKYDDLSEQSFYMVGGIDEVVAKAEKIAKESAA</sequence>
<protein>
    <recommendedName>
        <fullName>ATP synthase subunit beta-3, mitochondrial</fullName>
        <ecNumber>7.1.2.2</ecNumber>
    </recommendedName>
</protein>
<accession>Q9C5A9</accession>
<comment type="function">
    <text>Mitochondrial membrane ATP synthase (F(1)F(0) ATP synthase or Complex V) produces ATP from ADP in the presence of a proton gradient across the membrane which is generated by electron transport complexes of the respiratory chain. F-type ATPases consist of two structural domains, F(1) - containing the extramembraneous catalytic core, and F(0) - containing the membrane proton channel, linked together by a central stalk and a peripheral stalk. During catalysis, ATP synthesis in the catalytic domain of F(1) is coupled via a rotary mechanism of the central stalk subunits to proton translocation. Subunits alpha and beta form the catalytic core in F(1). Rotation of the central stalk against the surrounding alpha(3)beta(3) subunits leads to hydrolysis of ATP in three separate catalytic sites on the beta subunits.</text>
</comment>
<comment type="catalytic activity">
    <reaction>
        <text>ATP + H2O + 4 H(+)(in) = ADP + phosphate + 5 H(+)(out)</text>
        <dbReference type="Rhea" id="RHEA:57720"/>
        <dbReference type="ChEBI" id="CHEBI:15377"/>
        <dbReference type="ChEBI" id="CHEBI:15378"/>
        <dbReference type="ChEBI" id="CHEBI:30616"/>
        <dbReference type="ChEBI" id="CHEBI:43474"/>
        <dbReference type="ChEBI" id="CHEBI:456216"/>
        <dbReference type="EC" id="7.1.2.2"/>
    </reaction>
</comment>
<comment type="subunit">
    <text evidence="1">F-type ATPases have 2 components, CF(1) - the catalytic core - and CF(0) - the membrane proton channel. CF(1) has five subunits: alpha(3), beta(3), gamma(1), delta(1), epsilon(1). CF(0) has three main subunits: a, b and c (By similarity).</text>
</comment>
<comment type="subcellular location">
    <subcellularLocation>
        <location evidence="6">Mitochondrion</location>
    </subcellularLocation>
    <subcellularLocation>
        <location evidence="1">Mitochondrion inner membrane</location>
    </subcellularLocation>
    <text>Peripheral membrane protein.</text>
</comment>
<comment type="similarity">
    <text evidence="5">Belongs to the ATPase alpha/beta chains family.</text>
</comment>
<proteinExistence type="evidence at protein level"/>
<organism>
    <name type="scientific">Arabidopsis thaliana</name>
    <name type="common">Mouse-ear cress</name>
    <dbReference type="NCBI Taxonomy" id="3702"/>
    <lineage>
        <taxon>Eukaryota</taxon>
        <taxon>Viridiplantae</taxon>
        <taxon>Streptophyta</taxon>
        <taxon>Embryophyta</taxon>
        <taxon>Tracheophyta</taxon>
        <taxon>Spermatophyta</taxon>
        <taxon>Magnoliopsida</taxon>
        <taxon>eudicotyledons</taxon>
        <taxon>Gunneridae</taxon>
        <taxon>Pentapetalae</taxon>
        <taxon>rosids</taxon>
        <taxon>malvids</taxon>
        <taxon>Brassicales</taxon>
        <taxon>Brassicaceae</taxon>
        <taxon>Camelineae</taxon>
        <taxon>Arabidopsis</taxon>
    </lineage>
</organism>